<keyword id="KW-1015">Disulfide bond</keyword>
<keyword id="KW-0528">Neurotoxin</keyword>
<keyword id="KW-0964">Secreted</keyword>
<keyword id="KW-0732">Signal</keyword>
<keyword id="KW-0800">Toxin</keyword>
<sequence length="114" mass="13021">MGIRPTLQTNPLVDLLISTSQTQLQNAGLPFPPRSFGCLLVRHSPGCLPGSLWNLPRSRLPSCLPICLPRCRCWLNRERWRKGDDVFSDFCTKFVSTLIGPTSFAFRFVEFFYL</sequence>
<name>PNX78_SCOMU</name>
<accession>I6S3A9</accession>
<organism>
    <name type="scientific">Scolopendra mutilans</name>
    <name type="common">Chinese red-headed centipede</name>
    <name type="synonym">Scolopendra subspinipes mutilans</name>
    <dbReference type="NCBI Taxonomy" id="2836329"/>
    <lineage>
        <taxon>Eukaryota</taxon>
        <taxon>Metazoa</taxon>
        <taxon>Ecdysozoa</taxon>
        <taxon>Arthropoda</taxon>
        <taxon>Myriapoda</taxon>
        <taxon>Chilopoda</taxon>
        <taxon>Pleurostigmophora</taxon>
        <taxon>Scolopendromorpha</taxon>
        <taxon>Scolopendridae</taxon>
        <taxon>Scolopendra</taxon>
    </lineage>
</organism>
<proteinExistence type="inferred from homology"/>
<evidence type="ECO:0000255" key="1"/>
<evidence type="ECO:0000269" key="2">
    <source>
    </source>
</evidence>
<evidence type="ECO:0000303" key="3">
    <source>
    </source>
</evidence>
<evidence type="ECO:0000305" key="4"/>
<evidence type="ECO:0000305" key="5">
    <source>
    </source>
</evidence>
<evidence type="ECO:0000312" key="6">
    <source>
        <dbReference type="EMBL" id="AFM55027.1"/>
    </source>
</evidence>
<reference key="1">
    <citation type="journal article" date="2012" name="Mol. Cell. Proteomics">
        <title>Chemical punch packed in venoms makes centipedes excellent predators.</title>
        <authorList>
            <person name="Yang S."/>
            <person name="Liu Z."/>
            <person name="Xiao Y."/>
            <person name="Li Y."/>
            <person name="Rong M."/>
            <person name="Liang S."/>
            <person name="Zhang Z."/>
            <person name="Yu H."/>
            <person name="King G.F."/>
            <person name="Lai R."/>
        </authorList>
    </citation>
    <scope>NUCLEOTIDE SEQUENCE [MRNA]</scope>
    <scope>VARIANT PUTATIVE NEUROTOXIN 8 ARG-101</scope>
    <source>
        <tissue>Venom gland</tissue>
    </source>
</reference>
<comment type="subcellular location">
    <subcellularLocation>
        <location evidence="5">Secreted</location>
    </subcellularLocation>
</comment>
<comment type="tissue specificity">
    <text evidence="5">Expressed by the venom gland.</text>
</comment>
<comment type="PTM">
    <text evidence="4">Contains 3 disulfide bonds.</text>
</comment>
<comment type="similarity">
    <text evidence="4">Belongs to the scolopendra neurotoxin 8 family.</text>
</comment>
<feature type="signal peptide" evidence="1">
    <location>
        <begin position="1"/>
        <end status="unknown"/>
    </location>
</feature>
<feature type="chain" id="PRO_0000425495" description="Putative neurotoxin 7" evidence="4">
    <location>
        <begin status="unknown"/>
        <end position="114"/>
    </location>
</feature>
<feature type="sequence variant" description="In putative neurotoxin 8." evidence="2">
    <original>P</original>
    <variation>R</variation>
    <location>
        <position position="101"/>
    </location>
</feature>
<dbReference type="EMBL" id="JQ757080">
    <property type="protein sequence ID" value="AFM55027.1"/>
    <property type="molecule type" value="mRNA"/>
</dbReference>
<dbReference type="SMR" id="I6S3A9"/>
<dbReference type="GO" id="GO:0005576">
    <property type="term" value="C:extracellular region"/>
    <property type="evidence" value="ECO:0007669"/>
    <property type="project" value="UniProtKB-SubCell"/>
</dbReference>
<dbReference type="GO" id="GO:0090729">
    <property type="term" value="F:toxin activity"/>
    <property type="evidence" value="ECO:0007669"/>
    <property type="project" value="UniProtKB-KW"/>
</dbReference>
<protein>
    <recommendedName>
        <fullName evidence="3">Putative neurotoxin 7</fullName>
    </recommendedName>
    <alternativeName>
        <fullName evidence="6">Putative neurotoxin 8</fullName>
    </alternativeName>
</protein>